<name>DYL1_DROME</name>
<evidence type="ECO:0000269" key="1">
    <source>
    </source>
</evidence>
<evidence type="ECO:0000269" key="2">
    <source>
    </source>
</evidence>
<evidence type="ECO:0000269" key="3">
    <source>
    </source>
</evidence>
<evidence type="ECO:0000269" key="4">
    <source>
    </source>
</evidence>
<evidence type="ECO:0000305" key="5"/>
<evidence type="ECO:0007829" key="6">
    <source>
        <dbReference type="PDB" id="5E0L"/>
    </source>
</evidence>
<sequence>MSDRKAVIKNADMSEEMQQDAVDCATQALEKYNIEKDIAAYIKKEFDKKYNPTWHCIVGRNFGSYVTHETRHFIYFYLGQVAILLFKSG</sequence>
<keyword id="KW-0002">3D-structure</keyword>
<keyword id="KW-0963">Cytoplasm</keyword>
<keyword id="KW-0206">Cytoskeleton</keyword>
<keyword id="KW-0243">Dynein</keyword>
<keyword id="KW-0493">Microtubule</keyword>
<keyword id="KW-0505">Motor protein</keyword>
<keyword id="KW-1185">Reference proteome</keyword>
<keyword id="KW-0813">Transport</keyword>
<proteinExistence type="evidence at protein level"/>
<accession>Q24117</accession>
<accession>A4V3Y5</accession>
<accession>Q9V3Y6</accession>
<feature type="chain" id="PRO_0000195131" description="Dynein light chain 1, cytoplasmic">
    <location>
        <begin position="1"/>
        <end position="89"/>
    </location>
</feature>
<feature type="strand" evidence="6">
    <location>
        <begin position="6"/>
        <end position="13"/>
    </location>
</feature>
<feature type="helix" evidence="6">
    <location>
        <begin position="15"/>
        <end position="31"/>
    </location>
</feature>
<feature type="helix" evidence="6">
    <location>
        <begin position="35"/>
        <end position="50"/>
    </location>
</feature>
<feature type="strand" evidence="6">
    <location>
        <begin position="54"/>
        <end position="61"/>
    </location>
</feature>
<feature type="strand" evidence="6">
    <location>
        <begin position="63"/>
        <end position="78"/>
    </location>
</feature>
<feature type="strand" evidence="6">
    <location>
        <begin position="81"/>
        <end position="88"/>
    </location>
</feature>
<protein>
    <recommendedName>
        <fullName>Dynein light chain 1, cytoplasmic</fullName>
    </recommendedName>
    <alternativeName>
        <fullName>8 kDa dynein light chain</fullName>
    </alternativeName>
    <alternativeName>
        <fullName>Cut up protein</fullName>
    </alternativeName>
</protein>
<organism>
    <name type="scientific">Drosophila melanogaster</name>
    <name type="common">Fruit fly</name>
    <dbReference type="NCBI Taxonomy" id="7227"/>
    <lineage>
        <taxon>Eukaryota</taxon>
        <taxon>Metazoa</taxon>
        <taxon>Ecdysozoa</taxon>
        <taxon>Arthropoda</taxon>
        <taxon>Hexapoda</taxon>
        <taxon>Insecta</taxon>
        <taxon>Pterygota</taxon>
        <taxon>Neoptera</taxon>
        <taxon>Endopterygota</taxon>
        <taxon>Diptera</taxon>
        <taxon>Brachycera</taxon>
        <taxon>Muscomorpha</taxon>
        <taxon>Ephydroidea</taxon>
        <taxon>Drosophilidae</taxon>
        <taxon>Drosophila</taxon>
        <taxon>Sophophora</taxon>
    </lineage>
</organism>
<dbReference type="EMBL" id="U32855">
    <property type="protein sequence ID" value="AAB04148.1"/>
    <property type="molecule type" value="mRNA"/>
</dbReference>
<dbReference type="EMBL" id="U48846">
    <property type="protein sequence ID" value="AAD00072.1"/>
    <property type="molecule type" value="mRNA"/>
</dbReference>
<dbReference type="EMBL" id="U48848">
    <property type="protein sequence ID" value="AAD00074.1"/>
    <property type="molecule type" value="mRNA"/>
</dbReference>
<dbReference type="EMBL" id="AE014298">
    <property type="protein sequence ID" value="AAF45975.1"/>
    <property type="molecule type" value="Genomic_DNA"/>
</dbReference>
<dbReference type="EMBL" id="AE014298">
    <property type="protein sequence ID" value="AAN09126.1"/>
    <property type="molecule type" value="Genomic_DNA"/>
</dbReference>
<dbReference type="EMBL" id="AE014298">
    <property type="protein sequence ID" value="AAN09127.1"/>
    <property type="molecule type" value="Genomic_DNA"/>
</dbReference>
<dbReference type="RefSeq" id="NP_001245530.1">
    <property type="nucleotide sequence ID" value="NM_001258601.3"/>
</dbReference>
<dbReference type="RefSeq" id="NP_525075.1">
    <property type="nucleotide sequence ID" value="NM_080336.5"/>
</dbReference>
<dbReference type="RefSeq" id="NP_726942.1">
    <property type="nucleotide sequence ID" value="NM_167014.3"/>
</dbReference>
<dbReference type="RefSeq" id="NP_726943.1">
    <property type="nucleotide sequence ID" value="NM_167015.3"/>
</dbReference>
<dbReference type="PDB" id="1RHW">
    <property type="method" value="NMR"/>
    <property type="chains" value="A=1-89"/>
</dbReference>
<dbReference type="PDB" id="2P2T">
    <property type="method" value="X-ray"/>
    <property type="resolution" value="3.00 A"/>
    <property type="chains" value="A=1-89"/>
</dbReference>
<dbReference type="PDB" id="2PG1">
    <property type="method" value="X-ray"/>
    <property type="resolution" value="2.80 A"/>
    <property type="chains" value="A/B/C/D=1-89"/>
</dbReference>
<dbReference type="PDB" id="3BRI">
    <property type="method" value="X-ray"/>
    <property type="resolution" value="1.70 A"/>
    <property type="chains" value="A=1-89"/>
</dbReference>
<dbReference type="PDB" id="3BRL">
    <property type="method" value="X-ray"/>
    <property type="resolution" value="1.90 A"/>
    <property type="chains" value="A=1-87"/>
</dbReference>
<dbReference type="PDB" id="3DVH">
    <property type="method" value="X-ray"/>
    <property type="resolution" value="2.00 A"/>
    <property type="chains" value="A/B/C=1-89"/>
</dbReference>
<dbReference type="PDB" id="3DVP">
    <property type="method" value="X-ray"/>
    <property type="resolution" value="2.50 A"/>
    <property type="chains" value="A/B=1-89"/>
</dbReference>
<dbReference type="PDB" id="3DVT">
    <property type="method" value="X-ray"/>
    <property type="resolution" value="2.30 A"/>
    <property type="chains" value="A/B/C/D/E/F=1-89"/>
</dbReference>
<dbReference type="PDB" id="3E2B">
    <property type="method" value="X-ray"/>
    <property type="resolution" value="2.00 A"/>
    <property type="chains" value="A=1-89"/>
</dbReference>
<dbReference type="PDB" id="3FM7">
    <property type="method" value="X-ray"/>
    <property type="resolution" value="3.50 A"/>
    <property type="chains" value="E/F=1-89"/>
</dbReference>
<dbReference type="PDB" id="3GLW">
    <property type="method" value="X-ray"/>
    <property type="resolution" value="3.15 A"/>
    <property type="chains" value="A=1-89"/>
</dbReference>
<dbReference type="PDB" id="4QH7">
    <property type="method" value="X-ray"/>
    <property type="resolution" value="1.83 A"/>
    <property type="chains" value="A/B/E/F=1-89"/>
</dbReference>
<dbReference type="PDB" id="4QH8">
    <property type="method" value="X-ray"/>
    <property type="resolution" value="1.90 A"/>
    <property type="chains" value="A/B/E/F/G/H=1-89"/>
</dbReference>
<dbReference type="PDB" id="5E0L">
    <property type="method" value="X-ray"/>
    <property type="resolution" value="1.31 A"/>
    <property type="chains" value="A=3-89"/>
</dbReference>
<dbReference type="PDB" id="5E0M">
    <property type="method" value="X-ray"/>
    <property type="resolution" value="1.65 A"/>
    <property type="chains" value="A=1-89"/>
</dbReference>
<dbReference type="PDB" id="7K3J">
    <property type="method" value="X-ray"/>
    <property type="resolution" value="2.50 A"/>
    <property type="chains" value="A/C/E/G/I/K=1-89"/>
</dbReference>
<dbReference type="PDB" id="7K3K">
    <property type="method" value="X-ray"/>
    <property type="resolution" value="1.42 A"/>
    <property type="chains" value="A=1-89"/>
</dbReference>
<dbReference type="PDB" id="7K3L">
    <property type="method" value="X-ray"/>
    <property type="resolution" value="1.79 A"/>
    <property type="chains" value="A=1-89"/>
</dbReference>
<dbReference type="PDBsum" id="1RHW"/>
<dbReference type="PDBsum" id="2P2T"/>
<dbReference type="PDBsum" id="2PG1"/>
<dbReference type="PDBsum" id="3BRI"/>
<dbReference type="PDBsum" id="3BRL"/>
<dbReference type="PDBsum" id="3DVH"/>
<dbReference type="PDBsum" id="3DVP"/>
<dbReference type="PDBsum" id="3DVT"/>
<dbReference type="PDBsum" id="3E2B"/>
<dbReference type="PDBsum" id="3FM7"/>
<dbReference type="PDBsum" id="3GLW"/>
<dbReference type="PDBsum" id="4QH7"/>
<dbReference type="PDBsum" id="4QH8"/>
<dbReference type="PDBsum" id="5E0L"/>
<dbReference type="PDBsum" id="5E0M"/>
<dbReference type="PDBsum" id="7K3J"/>
<dbReference type="PDBsum" id="7K3K"/>
<dbReference type="PDBsum" id="7K3L"/>
<dbReference type="BMRB" id="Q24117"/>
<dbReference type="SMR" id="Q24117"/>
<dbReference type="BioGRID" id="57920">
    <property type="interactions" value="74"/>
</dbReference>
<dbReference type="ComplexPortal" id="CPX-8934">
    <property type="entry name" value="Panoramix-induced co-transcriptional silencing complex"/>
</dbReference>
<dbReference type="DIP" id="DIP-17520N"/>
<dbReference type="FunCoup" id="Q24117">
    <property type="interactions" value="1694"/>
</dbReference>
<dbReference type="IntAct" id="Q24117">
    <property type="interactions" value="47"/>
</dbReference>
<dbReference type="STRING" id="7227.FBpp0423173"/>
<dbReference type="iPTMnet" id="Q24117"/>
<dbReference type="PaxDb" id="7227-FBpp0070672"/>
<dbReference type="DNASU" id="31405"/>
<dbReference type="EnsemblMetazoa" id="FBtr0070704">
    <property type="protein sequence ID" value="FBpp0070672"/>
    <property type="gene ID" value="FBgn0011760"/>
</dbReference>
<dbReference type="EnsemblMetazoa" id="FBtr0070706">
    <property type="protein sequence ID" value="FBpp0070674"/>
    <property type="gene ID" value="FBgn0011760"/>
</dbReference>
<dbReference type="EnsemblMetazoa" id="FBtr0070707">
    <property type="protein sequence ID" value="FBpp0070675"/>
    <property type="gene ID" value="FBgn0011760"/>
</dbReference>
<dbReference type="EnsemblMetazoa" id="FBtr0307065">
    <property type="protein sequence ID" value="FBpp0297908"/>
    <property type="gene ID" value="FBgn0011760"/>
</dbReference>
<dbReference type="GeneID" id="31405"/>
<dbReference type="KEGG" id="dme:Dmel_CG6998"/>
<dbReference type="AGR" id="FB:FBgn0011760"/>
<dbReference type="CTD" id="31405"/>
<dbReference type="FlyBase" id="FBgn0011760">
    <property type="gene designation" value="ctp"/>
</dbReference>
<dbReference type="VEuPathDB" id="VectorBase:FBgn0011760"/>
<dbReference type="eggNOG" id="KOG3430">
    <property type="taxonomic scope" value="Eukaryota"/>
</dbReference>
<dbReference type="GeneTree" id="ENSGT00390000000378"/>
<dbReference type="HOGENOM" id="CLU_070944_4_0_1"/>
<dbReference type="InParanoid" id="Q24117"/>
<dbReference type="OMA" id="TDMELDP"/>
<dbReference type="OrthoDB" id="10033309at2759"/>
<dbReference type="PhylomeDB" id="Q24117"/>
<dbReference type="Reactome" id="R-DME-1632852">
    <property type="pathway name" value="Macroautophagy"/>
</dbReference>
<dbReference type="Reactome" id="R-DME-3371497">
    <property type="pathway name" value="HSP90 chaperone cycle for steroid hormone receptors (SHR) in the presence of ligand"/>
</dbReference>
<dbReference type="Reactome" id="R-DME-6798695">
    <property type="pathway name" value="Neutrophil degranulation"/>
</dbReference>
<dbReference type="Reactome" id="R-DME-6807878">
    <property type="pathway name" value="COPI-mediated anterograde transport"/>
</dbReference>
<dbReference type="Reactome" id="R-DME-6811436">
    <property type="pathway name" value="COPI-independent Golgi-to-ER retrograde traffic"/>
</dbReference>
<dbReference type="Reactome" id="R-DME-9646399">
    <property type="pathway name" value="Aggrephagy"/>
</dbReference>
<dbReference type="SignaLink" id="Q24117"/>
<dbReference type="BioGRID-ORCS" id="31405">
    <property type="hits" value="0 hits in 3 CRISPR screens"/>
</dbReference>
<dbReference type="CD-CODE" id="2838EF58">
    <property type="entry name" value="Centrosome"/>
</dbReference>
<dbReference type="ChiTaRS" id="ctp">
    <property type="organism name" value="fly"/>
</dbReference>
<dbReference type="EvolutionaryTrace" id="Q24117"/>
<dbReference type="GenomeRNAi" id="31405"/>
<dbReference type="PRO" id="PR:Q24117"/>
<dbReference type="Proteomes" id="UP000000803">
    <property type="component" value="Chromosome X"/>
</dbReference>
<dbReference type="Bgee" id="FBgn0011760">
    <property type="expression patterns" value="Expressed in adult capability neuron in brain and 317 other cell types or tissues"/>
</dbReference>
<dbReference type="ExpressionAtlas" id="Q24117">
    <property type="expression patterns" value="baseline and differential"/>
</dbReference>
<dbReference type="GO" id="GO:0005814">
    <property type="term" value="C:centriole"/>
    <property type="evidence" value="ECO:0000314"/>
    <property type="project" value="FlyBase"/>
</dbReference>
<dbReference type="GO" id="GO:0005737">
    <property type="term" value="C:cytoplasm"/>
    <property type="evidence" value="ECO:0000314"/>
    <property type="project" value="UniProtKB"/>
</dbReference>
<dbReference type="GO" id="GO:0005868">
    <property type="term" value="C:cytoplasmic dynein complex"/>
    <property type="evidence" value="ECO:0000314"/>
    <property type="project" value="FlyBase"/>
</dbReference>
<dbReference type="GO" id="GO:0005829">
    <property type="term" value="C:cytosol"/>
    <property type="evidence" value="ECO:0000314"/>
    <property type="project" value="FlyBase"/>
</dbReference>
<dbReference type="GO" id="GO:0030286">
    <property type="term" value="C:dynein complex"/>
    <property type="evidence" value="ECO:0000314"/>
    <property type="project" value="FlyBase"/>
</dbReference>
<dbReference type="GO" id="GO:0005874">
    <property type="term" value="C:microtubule"/>
    <property type="evidence" value="ECO:0007669"/>
    <property type="project" value="UniProtKB-KW"/>
</dbReference>
<dbReference type="GO" id="GO:0005634">
    <property type="term" value="C:nucleus"/>
    <property type="evidence" value="ECO:0000314"/>
    <property type="project" value="FlyBase"/>
</dbReference>
<dbReference type="GO" id="GO:0032991">
    <property type="term" value="C:protein-containing complex"/>
    <property type="evidence" value="ECO:0000314"/>
    <property type="project" value="CAFA"/>
</dbReference>
<dbReference type="GO" id="GO:0090571">
    <property type="term" value="C:RNA polymerase II transcription repressor complex"/>
    <property type="evidence" value="ECO:0000353"/>
    <property type="project" value="FlyBase"/>
</dbReference>
<dbReference type="GO" id="GO:0097718">
    <property type="term" value="F:disordered domain specific binding"/>
    <property type="evidence" value="ECO:0000353"/>
    <property type="project" value="CAFA"/>
</dbReference>
<dbReference type="GO" id="GO:0045505">
    <property type="term" value="F:dynein intermediate chain binding"/>
    <property type="evidence" value="ECO:0000353"/>
    <property type="project" value="FlyBase"/>
</dbReference>
<dbReference type="GO" id="GO:0051959">
    <property type="term" value="F:dynein light intermediate chain binding"/>
    <property type="evidence" value="ECO:0000314"/>
    <property type="project" value="FlyBase"/>
</dbReference>
<dbReference type="GO" id="GO:0042803">
    <property type="term" value="F:protein homodimerization activity"/>
    <property type="evidence" value="ECO:0000314"/>
    <property type="project" value="FlyBase"/>
</dbReference>
<dbReference type="GO" id="GO:0003714">
    <property type="term" value="F:transcription corepressor activity"/>
    <property type="evidence" value="ECO:0000315"/>
    <property type="project" value="FlyBase"/>
</dbReference>
<dbReference type="GO" id="GO:0051017">
    <property type="term" value="P:actin filament bundle assembly"/>
    <property type="evidence" value="ECO:0000315"/>
    <property type="project" value="FlyBase"/>
</dbReference>
<dbReference type="GO" id="GO:0022416">
    <property type="term" value="P:chaeta development"/>
    <property type="evidence" value="ECO:0000315"/>
    <property type="project" value="UniProtKB"/>
</dbReference>
<dbReference type="GO" id="GO:0008407">
    <property type="term" value="P:chaeta morphogenesis"/>
    <property type="evidence" value="ECO:0000315"/>
    <property type="project" value="FlyBase"/>
</dbReference>
<dbReference type="GO" id="GO:0000132">
    <property type="term" value="P:establishment of mitotic spindle orientation"/>
    <property type="evidence" value="ECO:0000315"/>
    <property type="project" value="FlyBase"/>
</dbReference>
<dbReference type="GO" id="GO:0007476">
    <property type="term" value="P:imaginal disc-derived wing morphogenesis"/>
    <property type="evidence" value="ECO:0000315"/>
    <property type="project" value="FlyBase"/>
</dbReference>
<dbReference type="GO" id="GO:0034454">
    <property type="term" value="P:microtubule anchoring at centrosome"/>
    <property type="evidence" value="ECO:0000315"/>
    <property type="project" value="FlyBase"/>
</dbReference>
<dbReference type="GO" id="GO:0048477">
    <property type="term" value="P:oogenesis"/>
    <property type="evidence" value="ECO:0000315"/>
    <property type="project" value="UniProtKB"/>
</dbReference>
<dbReference type="GO" id="GO:1904801">
    <property type="term" value="P:positive regulation of neuron remodeling"/>
    <property type="evidence" value="ECO:0000315"/>
    <property type="project" value="FlyBase"/>
</dbReference>
<dbReference type="GO" id="GO:0007291">
    <property type="term" value="P:sperm individualization"/>
    <property type="evidence" value="ECO:0000315"/>
    <property type="project" value="FlyBase"/>
</dbReference>
<dbReference type="GO" id="GO:0007290">
    <property type="term" value="P:spermatid nucleus elongation"/>
    <property type="evidence" value="ECO:0000315"/>
    <property type="project" value="FlyBase"/>
</dbReference>
<dbReference type="GO" id="GO:0007283">
    <property type="term" value="P:spermatogenesis"/>
    <property type="evidence" value="ECO:0000315"/>
    <property type="project" value="FlyBase"/>
</dbReference>
<dbReference type="GO" id="GO:0141006">
    <property type="term" value="P:transposable element silencing by piRNA-mediated heterochromatin formation"/>
    <property type="evidence" value="ECO:0000315"/>
    <property type="project" value="FlyBase"/>
</dbReference>
<dbReference type="GO" id="GO:0035220">
    <property type="term" value="P:wing disc development"/>
    <property type="evidence" value="ECO:0000315"/>
    <property type="project" value="UniProtKB"/>
</dbReference>
<dbReference type="CDD" id="cd21452">
    <property type="entry name" value="DLC-like_DYNLL1_DYNLL2"/>
    <property type="match status" value="1"/>
</dbReference>
<dbReference type="FunFam" id="3.30.740.10:FF:000001">
    <property type="entry name" value="Dynein light chain"/>
    <property type="match status" value="1"/>
</dbReference>
<dbReference type="Gene3D" id="3.30.740.10">
    <property type="entry name" value="Protein Inhibitor Of Neuronal Nitric Oxide Synthase"/>
    <property type="match status" value="1"/>
</dbReference>
<dbReference type="IDEAL" id="IID50051"/>
<dbReference type="InterPro" id="IPR037177">
    <property type="entry name" value="DLC_sf"/>
</dbReference>
<dbReference type="InterPro" id="IPR019763">
    <property type="entry name" value="Dynein_light_1/2_CS"/>
</dbReference>
<dbReference type="InterPro" id="IPR001372">
    <property type="entry name" value="Dynein_light_chain_typ-1/2"/>
</dbReference>
<dbReference type="PANTHER" id="PTHR11886">
    <property type="entry name" value="DYNEIN LIGHT CHAIN"/>
    <property type="match status" value="1"/>
</dbReference>
<dbReference type="PANTHER" id="PTHR11886:SF35">
    <property type="entry name" value="DYNEIN LIGHT CHAIN"/>
    <property type="match status" value="1"/>
</dbReference>
<dbReference type="Pfam" id="PF01221">
    <property type="entry name" value="Dynein_light"/>
    <property type="match status" value="1"/>
</dbReference>
<dbReference type="SMART" id="SM01375">
    <property type="entry name" value="Dynein_light"/>
    <property type="match status" value="1"/>
</dbReference>
<dbReference type="SUPFAM" id="SSF54648">
    <property type="entry name" value="DLC"/>
    <property type="match status" value="1"/>
</dbReference>
<dbReference type="PROSITE" id="PS01239">
    <property type="entry name" value="DYNEIN_LIGHT_1"/>
    <property type="match status" value="1"/>
</dbReference>
<comment type="function">
    <text evidence="4">Acts as a non-catalytic accessory component of a dynein complex.</text>
</comment>
<comment type="subunit">
    <text evidence="1 2 3">Interacts with spn-F (PubMed:16540510). Forms ternary complexes with spn-F and IKKepsilon (PubMed:26092846, PubMed:26540204).</text>
</comment>
<comment type="interaction">
    <interactant intactId="EBI-156442">
        <id>Q24117</id>
    </interactant>
    <interactant intactId="EBI-193067">
        <id>Q9VVR2</id>
        <label>bora</label>
    </interactant>
    <organismsDiffer>false</organismsDiffer>
    <experiments>3</experiments>
</comment>
<comment type="interaction">
    <interactant intactId="EBI-156442">
        <id>Q24117</id>
    </interactant>
    <interactant intactId="EBI-148486">
        <id>Q058Z8</id>
        <label>Dmel\CG30324</label>
    </interactant>
    <organismsDiffer>false</organismsDiffer>
    <experiments>5</experiments>
</comment>
<comment type="interaction">
    <interactant intactId="EBI-156442">
        <id>Q24117</id>
    </interactant>
    <interactant intactId="EBI-143939">
        <id>Q9VFB9</id>
        <label>Dmel\CG6654</label>
    </interactant>
    <organismsDiffer>false</organismsDiffer>
    <experiments>4</experiments>
</comment>
<comment type="interaction">
    <interactant intactId="EBI-156442">
        <id>Q24117</id>
    </interactant>
    <interactant intactId="EBI-88763">
        <id>Q7JX41</id>
        <label>geminin</label>
    </interactant>
    <organismsDiffer>false</organismsDiffer>
    <experiments>6</experiments>
</comment>
<comment type="interaction">
    <interactant intactId="EBI-156442">
        <id>Q24117</id>
    </interactant>
    <interactant intactId="EBI-192407">
        <id>Q8SYK5</id>
        <label>insv</label>
    </interactant>
    <organismsDiffer>false</organismsDiffer>
    <experiments>4</experiments>
</comment>
<comment type="subcellular location">
    <subcellularLocation>
        <location evidence="4">Cytoplasm</location>
        <location evidence="4">Cytoskeleton</location>
    </subcellularLocation>
</comment>
<comment type="tissue specificity">
    <text evidence="4">Ubiquitous.</text>
</comment>
<comment type="disruption phenotype">
    <text evidence="4">Flies exhibit defects in bristle and wing development.</text>
</comment>
<comment type="similarity">
    <text evidence="5">Belongs to the dynein light chain family.</text>
</comment>
<reference key="1">
    <citation type="journal article" date="1996" name="Mol. Cell. Biol.">
        <title>Cytoplasmic dynein (ddlc1) mutations cause morphogenetic defects and apoptotic cell death in Drosophila melanogaster.</title>
        <authorList>
            <person name="Dick T."/>
            <person name="Ray K."/>
            <person name="Salz H.K."/>
            <person name="Chia W."/>
        </authorList>
    </citation>
    <scope>NUCLEOTIDE SEQUENCE [MRNA]</scope>
    <scope>FUNCTION</scope>
    <scope>SUBCELLULAR LOCATION</scope>
    <scope>TISSUE SPECIFICITY</scope>
    <scope>DISRUPTION PHENOTYPE</scope>
</reference>
<reference key="2">
    <citation type="submission" date="1996-02" db="EMBL/GenBank/DDBJ databases">
        <authorList>
            <person name="Li M.-G."/>
            <person name="Serr M."/>
            <person name="Hays T.S."/>
        </authorList>
    </citation>
    <scope>NUCLEOTIDE SEQUENCE [MRNA]</scope>
    <source>
        <tissue>Head</tissue>
        <tissue>Ovary</tissue>
    </source>
</reference>
<reference key="3">
    <citation type="journal article" date="2000" name="Science">
        <title>The genome sequence of Drosophila melanogaster.</title>
        <authorList>
            <person name="Adams M.D."/>
            <person name="Celniker S.E."/>
            <person name="Holt R.A."/>
            <person name="Evans C.A."/>
            <person name="Gocayne J.D."/>
            <person name="Amanatides P.G."/>
            <person name="Scherer S.E."/>
            <person name="Li P.W."/>
            <person name="Hoskins R.A."/>
            <person name="Galle R.F."/>
            <person name="George R.A."/>
            <person name="Lewis S.E."/>
            <person name="Richards S."/>
            <person name="Ashburner M."/>
            <person name="Henderson S.N."/>
            <person name="Sutton G.G."/>
            <person name="Wortman J.R."/>
            <person name="Yandell M.D."/>
            <person name="Zhang Q."/>
            <person name="Chen L.X."/>
            <person name="Brandon R.C."/>
            <person name="Rogers Y.-H.C."/>
            <person name="Blazej R.G."/>
            <person name="Champe M."/>
            <person name="Pfeiffer B.D."/>
            <person name="Wan K.H."/>
            <person name="Doyle C."/>
            <person name="Baxter E.G."/>
            <person name="Helt G."/>
            <person name="Nelson C.R."/>
            <person name="Miklos G.L.G."/>
            <person name="Abril J.F."/>
            <person name="Agbayani A."/>
            <person name="An H.-J."/>
            <person name="Andrews-Pfannkoch C."/>
            <person name="Baldwin D."/>
            <person name="Ballew R.M."/>
            <person name="Basu A."/>
            <person name="Baxendale J."/>
            <person name="Bayraktaroglu L."/>
            <person name="Beasley E.M."/>
            <person name="Beeson K.Y."/>
            <person name="Benos P.V."/>
            <person name="Berman B.P."/>
            <person name="Bhandari D."/>
            <person name="Bolshakov S."/>
            <person name="Borkova D."/>
            <person name="Botchan M.R."/>
            <person name="Bouck J."/>
            <person name="Brokstein P."/>
            <person name="Brottier P."/>
            <person name="Burtis K.C."/>
            <person name="Busam D.A."/>
            <person name="Butler H."/>
            <person name="Cadieu E."/>
            <person name="Center A."/>
            <person name="Chandra I."/>
            <person name="Cherry J.M."/>
            <person name="Cawley S."/>
            <person name="Dahlke C."/>
            <person name="Davenport L.B."/>
            <person name="Davies P."/>
            <person name="de Pablos B."/>
            <person name="Delcher A."/>
            <person name="Deng Z."/>
            <person name="Mays A.D."/>
            <person name="Dew I."/>
            <person name="Dietz S.M."/>
            <person name="Dodson K."/>
            <person name="Doup L.E."/>
            <person name="Downes M."/>
            <person name="Dugan-Rocha S."/>
            <person name="Dunkov B.C."/>
            <person name="Dunn P."/>
            <person name="Durbin K.J."/>
            <person name="Evangelista C.C."/>
            <person name="Ferraz C."/>
            <person name="Ferriera S."/>
            <person name="Fleischmann W."/>
            <person name="Fosler C."/>
            <person name="Gabrielian A.E."/>
            <person name="Garg N.S."/>
            <person name="Gelbart W.M."/>
            <person name="Glasser K."/>
            <person name="Glodek A."/>
            <person name="Gong F."/>
            <person name="Gorrell J.H."/>
            <person name="Gu Z."/>
            <person name="Guan P."/>
            <person name="Harris M."/>
            <person name="Harris N.L."/>
            <person name="Harvey D.A."/>
            <person name="Heiman T.J."/>
            <person name="Hernandez J.R."/>
            <person name="Houck J."/>
            <person name="Hostin D."/>
            <person name="Houston K.A."/>
            <person name="Howland T.J."/>
            <person name="Wei M.-H."/>
            <person name="Ibegwam C."/>
            <person name="Jalali M."/>
            <person name="Kalush F."/>
            <person name="Karpen G.H."/>
            <person name="Ke Z."/>
            <person name="Kennison J.A."/>
            <person name="Ketchum K.A."/>
            <person name="Kimmel B.E."/>
            <person name="Kodira C.D."/>
            <person name="Kraft C.L."/>
            <person name="Kravitz S."/>
            <person name="Kulp D."/>
            <person name="Lai Z."/>
            <person name="Lasko P."/>
            <person name="Lei Y."/>
            <person name="Levitsky A.A."/>
            <person name="Li J.H."/>
            <person name="Li Z."/>
            <person name="Liang Y."/>
            <person name="Lin X."/>
            <person name="Liu X."/>
            <person name="Mattei B."/>
            <person name="McIntosh T.C."/>
            <person name="McLeod M.P."/>
            <person name="McPherson D."/>
            <person name="Merkulov G."/>
            <person name="Milshina N.V."/>
            <person name="Mobarry C."/>
            <person name="Morris J."/>
            <person name="Moshrefi A."/>
            <person name="Mount S.M."/>
            <person name="Moy M."/>
            <person name="Murphy B."/>
            <person name="Murphy L."/>
            <person name="Muzny D.M."/>
            <person name="Nelson D.L."/>
            <person name="Nelson D.R."/>
            <person name="Nelson K.A."/>
            <person name="Nixon K."/>
            <person name="Nusskern D.R."/>
            <person name="Pacleb J.M."/>
            <person name="Palazzolo M."/>
            <person name="Pittman G.S."/>
            <person name="Pan S."/>
            <person name="Pollard J."/>
            <person name="Puri V."/>
            <person name="Reese M.G."/>
            <person name="Reinert K."/>
            <person name="Remington K."/>
            <person name="Saunders R.D.C."/>
            <person name="Scheeler F."/>
            <person name="Shen H."/>
            <person name="Shue B.C."/>
            <person name="Siden-Kiamos I."/>
            <person name="Simpson M."/>
            <person name="Skupski M.P."/>
            <person name="Smith T.J."/>
            <person name="Spier E."/>
            <person name="Spradling A.C."/>
            <person name="Stapleton M."/>
            <person name="Strong R."/>
            <person name="Sun E."/>
            <person name="Svirskas R."/>
            <person name="Tector C."/>
            <person name="Turner R."/>
            <person name="Venter E."/>
            <person name="Wang A.H."/>
            <person name="Wang X."/>
            <person name="Wang Z.-Y."/>
            <person name="Wassarman D.A."/>
            <person name="Weinstock G.M."/>
            <person name="Weissenbach J."/>
            <person name="Williams S.M."/>
            <person name="Woodage T."/>
            <person name="Worley K.C."/>
            <person name="Wu D."/>
            <person name="Yang S."/>
            <person name="Yao Q.A."/>
            <person name="Ye J."/>
            <person name="Yeh R.-F."/>
            <person name="Zaveri J.S."/>
            <person name="Zhan M."/>
            <person name="Zhang G."/>
            <person name="Zhao Q."/>
            <person name="Zheng L."/>
            <person name="Zheng X.H."/>
            <person name="Zhong F.N."/>
            <person name="Zhong W."/>
            <person name="Zhou X."/>
            <person name="Zhu S.C."/>
            <person name="Zhu X."/>
            <person name="Smith H.O."/>
            <person name="Gibbs R.A."/>
            <person name="Myers E.W."/>
            <person name="Rubin G.M."/>
            <person name="Venter J.C."/>
        </authorList>
    </citation>
    <scope>NUCLEOTIDE SEQUENCE [LARGE SCALE GENOMIC DNA]</scope>
    <source>
        <strain>Berkeley</strain>
    </source>
</reference>
<reference key="4">
    <citation type="journal article" date="2002" name="Genome Biol.">
        <title>Annotation of the Drosophila melanogaster euchromatic genome: a systematic review.</title>
        <authorList>
            <person name="Misra S."/>
            <person name="Crosby M.A."/>
            <person name="Mungall C.J."/>
            <person name="Matthews B.B."/>
            <person name="Campbell K.S."/>
            <person name="Hradecky P."/>
            <person name="Huang Y."/>
            <person name="Kaminker J.S."/>
            <person name="Millburn G.H."/>
            <person name="Prochnik S.E."/>
            <person name="Smith C.D."/>
            <person name="Tupy J.L."/>
            <person name="Whitfield E.J."/>
            <person name="Bayraktaroglu L."/>
            <person name="Berman B.P."/>
            <person name="Bettencourt B.R."/>
            <person name="Celniker S.E."/>
            <person name="de Grey A.D.N.J."/>
            <person name="Drysdale R.A."/>
            <person name="Harris N.L."/>
            <person name="Richter J."/>
            <person name="Russo S."/>
            <person name="Schroeder A.J."/>
            <person name="Shu S.Q."/>
            <person name="Stapleton M."/>
            <person name="Yamada C."/>
            <person name="Ashburner M."/>
            <person name="Gelbart W.M."/>
            <person name="Rubin G.M."/>
            <person name="Lewis S.E."/>
        </authorList>
    </citation>
    <scope>GENOME REANNOTATION</scope>
    <source>
        <strain>Berkeley</strain>
    </source>
</reference>
<reference key="5">
    <citation type="journal article" date="2006" name="Development">
        <title>spn-F encodes a novel protein that affects oocyte patterning and bristle morphology in Drosophila.</title>
        <authorList>
            <person name="Abdu U."/>
            <person name="Bar D."/>
            <person name="Schuepbach T."/>
        </authorList>
    </citation>
    <scope>INTERACTION WITH SPN-F</scope>
</reference>
<reference key="6">
    <citation type="journal article" date="2015" name="Development">
        <title>A transport and retention mechanism for the sustained distal localization of Spn-F-IKKepsilon during Drosophila bristle elongation.</title>
        <authorList>
            <person name="Otani T."/>
            <person name="Oshima K."/>
            <person name="Kimpara A."/>
            <person name="Takeda M."/>
            <person name="Abdu U."/>
            <person name="Hayashi S."/>
        </authorList>
    </citation>
    <scope>IDENTIFICATION IN COMPLEX WITH SPN-F AND IKKEPSILON</scope>
</reference>
<reference key="7">
    <citation type="journal article" date="2015" name="PLoS Genet.">
        <title>Spindle-F is the central mediator of Ik2 kinase-dependent dendrite pruning in Drosophila sensory neurons.</title>
        <authorList>
            <person name="Lin T."/>
            <person name="Pan P.Y."/>
            <person name="Lai Y.T."/>
            <person name="Chiang K.W."/>
            <person name="Hsieh H.L."/>
            <person name="Wu Y.P."/>
            <person name="Ke J.M."/>
            <person name="Lee M.C."/>
            <person name="Liao S.S."/>
            <person name="Shih H.T."/>
            <person name="Tang C.Y."/>
            <person name="Yang S.B."/>
            <person name="Cheng H.C."/>
            <person name="Wu J.T."/>
            <person name="Jan Y.N."/>
            <person name="Lee H.H."/>
        </authorList>
    </citation>
    <scope>IDENTIFICATION IN COMPLEX WITH SPN-F AND IKKEPSILON</scope>
</reference>
<gene>
    <name type="primary">ctp</name>
    <name type="synonym">Cdlc1</name>
    <name type="synonym">ddlc1</name>
    <name type="ORF">CG6998</name>
</gene>